<proteinExistence type="inferred from homology"/>
<keyword id="KW-0119">Carbohydrate metabolism</keyword>
<keyword id="KW-0963">Cytoplasm</keyword>
<keyword id="KW-0413">Isomerase</keyword>
<keyword id="KW-0479">Metal-binding</keyword>
<keyword id="KW-1185">Reference proteome</keyword>
<keyword id="KW-0862">Zinc</keyword>
<reference key="1">
    <citation type="journal article" date="2007" name="Science">
        <title>Legumes symbioses: absence of nod genes in photosynthetic bradyrhizobia.</title>
        <authorList>
            <person name="Giraud E."/>
            <person name="Moulin L."/>
            <person name="Vallenet D."/>
            <person name="Barbe V."/>
            <person name="Cytryn E."/>
            <person name="Avarre J.-C."/>
            <person name="Jaubert M."/>
            <person name="Simon D."/>
            <person name="Cartieaux F."/>
            <person name="Prin Y."/>
            <person name="Bena G."/>
            <person name="Hannibal L."/>
            <person name="Fardoux J."/>
            <person name="Kojadinovic M."/>
            <person name="Vuillet L."/>
            <person name="Lajus A."/>
            <person name="Cruveiller S."/>
            <person name="Rouy Z."/>
            <person name="Mangenot S."/>
            <person name="Segurens B."/>
            <person name="Dossat C."/>
            <person name="Franck W.L."/>
            <person name="Chang W.-S."/>
            <person name="Saunders E."/>
            <person name="Bruce D."/>
            <person name="Richardson P."/>
            <person name="Normand P."/>
            <person name="Dreyfus B."/>
            <person name="Pignol D."/>
            <person name="Stacey G."/>
            <person name="Emerich D."/>
            <person name="Vermeglio A."/>
            <person name="Medigue C."/>
            <person name="Sadowsky M."/>
        </authorList>
    </citation>
    <scope>NUCLEOTIDE SEQUENCE [LARGE SCALE GENOMIC DNA]</scope>
    <source>
        <strain>ORS 278</strain>
    </source>
</reference>
<comment type="function">
    <text evidence="1">Catalyzes the isomerization of sedoheptulose 7-phosphate in D-glycero-D-manno-heptose 7-phosphate.</text>
</comment>
<comment type="catalytic activity">
    <reaction evidence="1">
        <text>2 D-sedoheptulose 7-phosphate = D-glycero-alpha-D-manno-heptose 7-phosphate + D-glycero-beta-D-manno-heptose 7-phosphate</text>
        <dbReference type="Rhea" id="RHEA:27489"/>
        <dbReference type="ChEBI" id="CHEBI:57483"/>
        <dbReference type="ChEBI" id="CHEBI:60203"/>
        <dbReference type="ChEBI" id="CHEBI:60204"/>
        <dbReference type="EC" id="5.3.1.28"/>
    </reaction>
</comment>
<comment type="cofactor">
    <cofactor evidence="1">
        <name>Zn(2+)</name>
        <dbReference type="ChEBI" id="CHEBI:29105"/>
    </cofactor>
    <text evidence="1">Binds 1 zinc ion per subunit.</text>
</comment>
<comment type="pathway">
    <text evidence="1">Carbohydrate biosynthesis; D-glycero-D-manno-heptose 7-phosphate biosynthesis; D-glycero-alpha-D-manno-heptose 7-phosphate and D-glycero-beta-D-manno-heptose 7-phosphate from sedoheptulose 7-phosphate: step 1/1.</text>
</comment>
<comment type="subunit">
    <text evidence="1">Homotetramer.</text>
</comment>
<comment type="subcellular location">
    <subcellularLocation>
        <location evidence="1">Cytoplasm</location>
    </subcellularLocation>
</comment>
<comment type="miscellaneous">
    <text evidence="1">The reaction produces a racemic mixture of D-glycero-alpha-D-manno-heptose 7-phosphate and D-glycero-beta-D-manno-heptose 7-phosphate.</text>
</comment>
<comment type="similarity">
    <text evidence="1">Belongs to the SIS family. GmhA subfamily.</text>
</comment>
<name>GMHA_BRASO</name>
<protein>
    <recommendedName>
        <fullName evidence="1">Phosphoheptose isomerase</fullName>
        <ecNumber evidence="1">5.3.1.28</ecNumber>
    </recommendedName>
    <alternativeName>
        <fullName evidence="1">Sedoheptulose 7-phosphate isomerase</fullName>
    </alternativeName>
</protein>
<evidence type="ECO:0000255" key="1">
    <source>
        <dbReference type="HAMAP-Rule" id="MF_00067"/>
    </source>
</evidence>
<accession>A4YYB9</accession>
<feature type="chain" id="PRO_1000009054" description="Phosphoheptose isomerase">
    <location>
        <begin position="1"/>
        <end position="198"/>
    </location>
</feature>
<feature type="domain" description="SIS" evidence="1">
    <location>
        <begin position="40"/>
        <end position="198"/>
    </location>
</feature>
<feature type="binding site" evidence="1">
    <location>
        <begin position="55"/>
        <end position="57"/>
    </location>
    <ligand>
        <name>substrate</name>
    </ligand>
</feature>
<feature type="binding site" evidence="1">
    <location>
        <position position="64"/>
    </location>
    <ligand>
        <name>Zn(2+)</name>
        <dbReference type="ChEBI" id="CHEBI:29105"/>
    </ligand>
</feature>
<feature type="binding site" evidence="1">
    <location>
        <position position="68"/>
    </location>
    <ligand>
        <name>substrate</name>
    </ligand>
</feature>
<feature type="binding site" evidence="1">
    <location>
        <position position="68"/>
    </location>
    <ligand>
        <name>Zn(2+)</name>
        <dbReference type="ChEBI" id="CHEBI:29105"/>
    </ligand>
</feature>
<feature type="binding site" evidence="1">
    <location>
        <begin position="97"/>
        <end position="98"/>
    </location>
    <ligand>
        <name>substrate</name>
    </ligand>
</feature>
<feature type="binding site" evidence="1">
    <location>
        <begin position="123"/>
        <end position="125"/>
    </location>
    <ligand>
        <name>substrate</name>
    </ligand>
</feature>
<feature type="binding site" evidence="1">
    <location>
        <position position="128"/>
    </location>
    <ligand>
        <name>substrate</name>
    </ligand>
</feature>
<feature type="binding site" evidence="1">
    <location>
        <position position="175"/>
    </location>
    <ligand>
        <name>substrate</name>
    </ligand>
</feature>
<feature type="binding site" evidence="1">
    <location>
        <position position="175"/>
    </location>
    <ligand>
        <name>Zn(2+)</name>
        <dbReference type="ChEBI" id="CHEBI:29105"/>
    </ligand>
</feature>
<feature type="binding site" evidence="1">
    <location>
        <position position="183"/>
    </location>
    <ligand>
        <name>Zn(2+)</name>
        <dbReference type="ChEBI" id="CHEBI:29105"/>
    </ligand>
</feature>
<organism>
    <name type="scientific">Bradyrhizobium sp. (strain ORS 278)</name>
    <dbReference type="NCBI Taxonomy" id="114615"/>
    <lineage>
        <taxon>Bacteria</taxon>
        <taxon>Pseudomonadati</taxon>
        <taxon>Pseudomonadota</taxon>
        <taxon>Alphaproteobacteria</taxon>
        <taxon>Hyphomicrobiales</taxon>
        <taxon>Nitrobacteraceae</taxon>
        <taxon>Bradyrhizobium</taxon>
    </lineage>
</organism>
<sequence>MTDALDSLISNHLARSRAAMERAAVDGALLASAERIATAIIGALRGGHKLLIVGNGGSAADAQHIAAEIVGRYKQERPAFAAIALTTDTSALTAIGNDYGFDHVFARQVEGLGASGDVLLAISTSGRSPSILNALRKARERGLVTIGFTGTNGLGMGELCDELLVAPSDDTPLIQQIHLATAHGICETIEAALMQDAR</sequence>
<dbReference type="EC" id="5.3.1.28" evidence="1"/>
<dbReference type="EMBL" id="CU234118">
    <property type="protein sequence ID" value="CAL78895.1"/>
    <property type="molecule type" value="Genomic_DNA"/>
</dbReference>
<dbReference type="RefSeq" id="WP_012028831.1">
    <property type="nucleotide sequence ID" value="NC_009445.1"/>
</dbReference>
<dbReference type="SMR" id="A4YYB9"/>
<dbReference type="STRING" id="114615.BRADO5204"/>
<dbReference type="KEGG" id="bra:BRADO5204"/>
<dbReference type="eggNOG" id="COG0279">
    <property type="taxonomic scope" value="Bacteria"/>
</dbReference>
<dbReference type="HOGENOM" id="CLU_080999_0_1_5"/>
<dbReference type="UniPathway" id="UPA00041">
    <property type="reaction ID" value="UER00436"/>
</dbReference>
<dbReference type="Proteomes" id="UP000001994">
    <property type="component" value="Chromosome"/>
</dbReference>
<dbReference type="GO" id="GO:0005737">
    <property type="term" value="C:cytoplasm"/>
    <property type="evidence" value="ECO:0007669"/>
    <property type="project" value="UniProtKB-SubCell"/>
</dbReference>
<dbReference type="GO" id="GO:0097367">
    <property type="term" value="F:carbohydrate derivative binding"/>
    <property type="evidence" value="ECO:0007669"/>
    <property type="project" value="InterPro"/>
</dbReference>
<dbReference type="GO" id="GO:0008968">
    <property type="term" value="F:D-sedoheptulose 7-phosphate isomerase activity"/>
    <property type="evidence" value="ECO:0007669"/>
    <property type="project" value="UniProtKB-UniRule"/>
</dbReference>
<dbReference type="GO" id="GO:0008270">
    <property type="term" value="F:zinc ion binding"/>
    <property type="evidence" value="ECO:0007669"/>
    <property type="project" value="UniProtKB-UniRule"/>
</dbReference>
<dbReference type="GO" id="GO:0005975">
    <property type="term" value="P:carbohydrate metabolic process"/>
    <property type="evidence" value="ECO:0007669"/>
    <property type="project" value="UniProtKB-UniRule"/>
</dbReference>
<dbReference type="GO" id="GO:2001061">
    <property type="term" value="P:D-glycero-D-manno-heptose 7-phosphate biosynthetic process"/>
    <property type="evidence" value="ECO:0007669"/>
    <property type="project" value="UniProtKB-UniPathway"/>
</dbReference>
<dbReference type="CDD" id="cd05006">
    <property type="entry name" value="SIS_GmhA"/>
    <property type="match status" value="1"/>
</dbReference>
<dbReference type="Gene3D" id="3.40.50.10490">
    <property type="entry name" value="Glucose-6-phosphate isomerase like protein, domain 1"/>
    <property type="match status" value="1"/>
</dbReference>
<dbReference type="HAMAP" id="MF_00067">
    <property type="entry name" value="GmhA"/>
    <property type="match status" value="1"/>
</dbReference>
<dbReference type="InterPro" id="IPR035461">
    <property type="entry name" value="GmhA/DiaA"/>
</dbReference>
<dbReference type="InterPro" id="IPR004515">
    <property type="entry name" value="Phosphoheptose_Isoase"/>
</dbReference>
<dbReference type="InterPro" id="IPR001347">
    <property type="entry name" value="SIS_dom"/>
</dbReference>
<dbReference type="InterPro" id="IPR046348">
    <property type="entry name" value="SIS_dom_sf"/>
</dbReference>
<dbReference type="InterPro" id="IPR050099">
    <property type="entry name" value="SIS_GmhA/DiaA_subfam"/>
</dbReference>
<dbReference type="PANTHER" id="PTHR30390:SF6">
    <property type="entry name" value="DNAA INITIATOR-ASSOCIATING PROTEIN DIAA"/>
    <property type="match status" value="1"/>
</dbReference>
<dbReference type="PANTHER" id="PTHR30390">
    <property type="entry name" value="SEDOHEPTULOSE 7-PHOSPHATE ISOMERASE / DNAA INITIATOR-ASSOCIATING FACTOR FOR REPLICATION INITIATION"/>
    <property type="match status" value="1"/>
</dbReference>
<dbReference type="Pfam" id="PF13580">
    <property type="entry name" value="SIS_2"/>
    <property type="match status" value="1"/>
</dbReference>
<dbReference type="SUPFAM" id="SSF53697">
    <property type="entry name" value="SIS domain"/>
    <property type="match status" value="1"/>
</dbReference>
<dbReference type="PROSITE" id="PS51464">
    <property type="entry name" value="SIS"/>
    <property type="match status" value="1"/>
</dbReference>
<gene>
    <name evidence="1" type="primary">gmhA</name>
    <name type="ordered locus">BRADO5204</name>
</gene>